<proteinExistence type="inferred from homology"/>
<name>UPPP1_BACCZ</name>
<comment type="function">
    <text evidence="1">Catalyzes the dephosphorylation of undecaprenyl diphosphate (UPP). Confers resistance to bacitracin.</text>
</comment>
<comment type="catalytic activity">
    <reaction evidence="1">
        <text>di-trans,octa-cis-undecaprenyl diphosphate + H2O = di-trans,octa-cis-undecaprenyl phosphate + phosphate + H(+)</text>
        <dbReference type="Rhea" id="RHEA:28094"/>
        <dbReference type="ChEBI" id="CHEBI:15377"/>
        <dbReference type="ChEBI" id="CHEBI:15378"/>
        <dbReference type="ChEBI" id="CHEBI:43474"/>
        <dbReference type="ChEBI" id="CHEBI:58405"/>
        <dbReference type="ChEBI" id="CHEBI:60392"/>
        <dbReference type="EC" id="3.6.1.27"/>
    </reaction>
</comment>
<comment type="subcellular location">
    <subcellularLocation>
        <location evidence="1">Cell membrane</location>
        <topology evidence="1">Multi-pass membrane protein</topology>
    </subcellularLocation>
</comment>
<comment type="miscellaneous">
    <text>Bacitracin is thought to be involved in the inhibition of peptidoglycan synthesis by sequestering undecaprenyl diphosphate, thereby reducing the pool of lipid carrier available.</text>
</comment>
<comment type="similarity">
    <text evidence="1">Belongs to the UppP family.</text>
</comment>
<gene>
    <name evidence="1" type="primary">uppP1</name>
    <name type="synonym">bacA1</name>
    <name type="ordered locus">BCE33L0254</name>
</gene>
<dbReference type="EC" id="3.6.1.27" evidence="1"/>
<dbReference type="EMBL" id="CP000001">
    <property type="protein sequence ID" value="AAU19982.1"/>
    <property type="molecule type" value="Genomic_DNA"/>
</dbReference>
<dbReference type="SMR" id="Q63GU6"/>
<dbReference type="KEGG" id="bcz:BCE33L0254"/>
<dbReference type="PATRIC" id="fig|288681.22.peg.5357"/>
<dbReference type="Proteomes" id="UP000002612">
    <property type="component" value="Chromosome"/>
</dbReference>
<dbReference type="GO" id="GO:0005886">
    <property type="term" value="C:plasma membrane"/>
    <property type="evidence" value="ECO:0007669"/>
    <property type="project" value="UniProtKB-SubCell"/>
</dbReference>
<dbReference type="GO" id="GO:0050380">
    <property type="term" value="F:undecaprenyl-diphosphatase activity"/>
    <property type="evidence" value="ECO:0007669"/>
    <property type="project" value="UniProtKB-UniRule"/>
</dbReference>
<dbReference type="GO" id="GO:0071555">
    <property type="term" value="P:cell wall organization"/>
    <property type="evidence" value="ECO:0007669"/>
    <property type="project" value="UniProtKB-KW"/>
</dbReference>
<dbReference type="GO" id="GO:0009252">
    <property type="term" value="P:peptidoglycan biosynthetic process"/>
    <property type="evidence" value="ECO:0007669"/>
    <property type="project" value="UniProtKB-KW"/>
</dbReference>
<dbReference type="GO" id="GO:0008360">
    <property type="term" value="P:regulation of cell shape"/>
    <property type="evidence" value="ECO:0007669"/>
    <property type="project" value="UniProtKB-KW"/>
</dbReference>
<dbReference type="GO" id="GO:0046677">
    <property type="term" value="P:response to antibiotic"/>
    <property type="evidence" value="ECO:0007669"/>
    <property type="project" value="UniProtKB-UniRule"/>
</dbReference>
<dbReference type="HAMAP" id="MF_01006">
    <property type="entry name" value="Undec_diphosphatase"/>
    <property type="match status" value="1"/>
</dbReference>
<dbReference type="InterPro" id="IPR003824">
    <property type="entry name" value="UppP"/>
</dbReference>
<dbReference type="NCBIfam" id="NF001388">
    <property type="entry name" value="PRK00281.1-1"/>
    <property type="match status" value="1"/>
</dbReference>
<dbReference type="NCBIfam" id="NF001389">
    <property type="entry name" value="PRK00281.1-2"/>
    <property type="match status" value="1"/>
</dbReference>
<dbReference type="NCBIfam" id="NF001390">
    <property type="entry name" value="PRK00281.1-4"/>
    <property type="match status" value="1"/>
</dbReference>
<dbReference type="NCBIfam" id="TIGR00753">
    <property type="entry name" value="undec_PP_bacA"/>
    <property type="match status" value="1"/>
</dbReference>
<dbReference type="PANTHER" id="PTHR30622">
    <property type="entry name" value="UNDECAPRENYL-DIPHOSPHATASE"/>
    <property type="match status" value="1"/>
</dbReference>
<dbReference type="PANTHER" id="PTHR30622:SF3">
    <property type="entry name" value="UNDECAPRENYL-DIPHOSPHATASE"/>
    <property type="match status" value="1"/>
</dbReference>
<dbReference type="Pfam" id="PF02673">
    <property type="entry name" value="BacA"/>
    <property type="match status" value="1"/>
</dbReference>
<evidence type="ECO:0000255" key="1">
    <source>
        <dbReference type="HAMAP-Rule" id="MF_01006"/>
    </source>
</evidence>
<sequence>MSDIIIAFILGIVEGLAEFLPISSTGHLILVGHLLGFEGERAKTFEIVIQLGAILAIAILYHKRLVSLCNIKPLLRKEKKFNAFHVFLGVFPAVVAGLLLHDVIKTYLFQPYTVVIGLVAGAILMILAEVKKQEATACSLDDLTYRQALTIGFFQCLAVYPGFSRAGSTISGGLLAKVNYKTASEFSFLIALPVMVGATSLDLLKSWKYLSVDDIPMFAVGFITSFIVAMLAVVTFLKLLEKIGLKPFAYYRILLAILFTLFVLL</sequence>
<keyword id="KW-0046">Antibiotic resistance</keyword>
<keyword id="KW-1003">Cell membrane</keyword>
<keyword id="KW-0133">Cell shape</keyword>
<keyword id="KW-0961">Cell wall biogenesis/degradation</keyword>
<keyword id="KW-0378">Hydrolase</keyword>
<keyword id="KW-0472">Membrane</keyword>
<keyword id="KW-0573">Peptidoglycan synthesis</keyword>
<keyword id="KW-0812">Transmembrane</keyword>
<keyword id="KW-1133">Transmembrane helix</keyword>
<protein>
    <recommendedName>
        <fullName evidence="1">Undecaprenyl-diphosphatase 1</fullName>
        <ecNumber evidence="1">3.6.1.27</ecNumber>
    </recommendedName>
    <alternativeName>
        <fullName evidence="1">Bacitracin resistance protein 1</fullName>
    </alternativeName>
    <alternativeName>
        <fullName evidence="1">Undecaprenyl pyrophosphate phosphatase 1</fullName>
    </alternativeName>
</protein>
<reference key="1">
    <citation type="journal article" date="2006" name="J. Bacteriol.">
        <title>Pathogenomic sequence analysis of Bacillus cereus and Bacillus thuringiensis isolates closely related to Bacillus anthracis.</title>
        <authorList>
            <person name="Han C.S."/>
            <person name="Xie G."/>
            <person name="Challacombe J.F."/>
            <person name="Altherr M.R."/>
            <person name="Bhotika S.S."/>
            <person name="Bruce D."/>
            <person name="Campbell C.S."/>
            <person name="Campbell M.L."/>
            <person name="Chen J."/>
            <person name="Chertkov O."/>
            <person name="Cleland C."/>
            <person name="Dimitrijevic M."/>
            <person name="Doggett N.A."/>
            <person name="Fawcett J.J."/>
            <person name="Glavina T."/>
            <person name="Goodwin L.A."/>
            <person name="Hill K.K."/>
            <person name="Hitchcock P."/>
            <person name="Jackson P.J."/>
            <person name="Keim P."/>
            <person name="Kewalramani A.R."/>
            <person name="Longmire J."/>
            <person name="Lucas S."/>
            <person name="Malfatti S."/>
            <person name="McMurry K."/>
            <person name="Meincke L.J."/>
            <person name="Misra M."/>
            <person name="Moseman B.L."/>
            <person name="Mundt M."/>
            <person name="Munk A.C."/>
            <person name="Okinaka R.T."/>
            <person name="Parson-Quintana B."/>
            <person name="Reilly L.P."/>
            <person name="Richardson P."/>
            <person name="Robinson D.L."/>
            <person name="Rubin E."/>
            <person name="Saunders E."/>
            <person name="Tapia R."/>
            <person name="Tesmer J.G."/>
            <person name="Thayer N."/>
            <person name="Thompson L.S."/>
            <person name="Tice H."/>
            <person name="Ticknor L.O."/>
            <person name="Wills P.L."/>
            <person name="Brettin T.S."/>
            <person name="Gilna P."/>
        </authorList>
    </citation>
    <scope>NUCLEOTIDE SEQUENCE [LARGE SCALE GENOMIC DNA]</scope>
    <source>
        <strain>ZK / E33L</strain>
    </source>
</reference>
<accession>Q63GU6</accession>
<feature type="chain" id="PRO_0000151094" description="Undecaprenyl-diphosphatase 1">
    <location>
        <begin position="1"/>
        <end position="265"/>
    </location>
</feature>
<feature type="transmembrane region" description="Helical" evidence="1">
    <location>
        <begin position="4"/>
        <end position="24"/>
    </location>
</feature>
<feature type="transmembrane region" description="Helical" evidence="1">
    <location>
        <begin position="42"/>
        <end position="62"/>
    </location>
</feature>
<feature type="transmembrane region" description="Helical" evidence="1">
    <location>
        <begin position="84"/>
        <end position="104"/>
    </location>
</feature>
<feature type="transmembrane region" description="Helical" evidence="1">
    <location>
        <begin position="108"/>
        <end position="128"/>
    </location>
</feature>
<feature type="transmembrane region" description="Helical" evidence="1">
    <location>
        <begin position="184"/>
        <end position="204"/>
    </location>
</feature>
<feature type="transmembrane region" description="Helical" evidence="1">
    <location>
        <begin position="217"/>
        <end position="237"/>
    </location>
</feature>
<feature type="transmembrane region" description="Helical" evidence="1">
    <location>
        <begin position="245"/>
        <end position="265"/>
    </location>
</feature>
<organism>
    <name type="scientific">Bacillus cereus (strain ZK / E33L)</name>
    <dbReference type="NCBI Taxonomy" id="288681"/>
    <lineage>
        <taxon>Bacteria</taxon>
        <taxon>Bacillati</taxon>
        <taxon>Bacillota</taxon>
        <taxon>Bacilli</taxon>
        <taxon>Bacillales</taxon>
        <taxon>Bacillaceae</taxon>
        <taxon>Bacillus</taxon>
        <taxon>Bacillus cereus group</taxon>
    </lineage>
</organism>